<feature type="signal peptide" evidence="2">
    <location>
        <begin position="1"/>
        <end position="22"/>
    </location>
</feature>
<feature type="chain" id="PRO_0000012983" description="Frizzled-3">
    <location>
        <begin position="23"/>
        <end position="666"/>
    </location>
</feature>
<feature type="topological domain" description="Extracellular" evidence="2">
    <location>
        <begin position="23"/>
        <end position="205"/>
    </location>
</feature>
<feature type="transmembrane region" description="Helical; Name=1" evidence="2">
    <location>
        <begin position="206"/>
        <end position="226"/>
    </location>
</feature>
<feature type="topological domain" description="Cytoplasmic" evidence="2">
    <location>
        <begin position="227"/>
        <end position="237"/>
    </location>
</feature>
<feature type="transmembrane region" description="Helical; Name=2" evidence="2">
    <location>
        <begin position="238"/>
        <end position="258"/>
    </location>
</feature>
<feature type="topological domain" description="Extracellular" evidence="2">
    <location>
        <begin position="259"/>
        <end position="288"/>
    </location>
</feature>
<feature type="transmembrane region" description="Helical; Name=3" evidence="2">
    <location>
        <begin position="289"/>
        <end position="309"/>
    </location>
</feature>
<feature type="topological domain" description="Cytoplasmic" evidence="2">
    <location>
        <begin position="310"/>
        <end position="328"/>
    </location>
</feature>
<feature type="transmembrane region" description="Helical; Name=4" evidence="2">
    <location>
        <begin position="329"/>
        <end position="349"/>
    </location>
</feature>
<feature type="topological domain" description="Extracellular" evidence="2">
    <location>
        <begin position="350"/>
        <end position="374"/>
    </location>
</feature>
<feature type="transmembrane region" description="Helical; Name=5" evidence="2">
    <location>
        <begin position="375"/>
        <end position="395"/>
    </location>
</feature>
<feature type="topological domain" description="Cytoplasmic" evidence="2">
    <location>
        <begin position="396"/>
        <end position="420"/>
    </location>
</feature>
<feature type="transmembrane region" description="Helical; Name=6" evidence="2">
    <location>
        <begin position="421"/>
        <end position="441"/>
    </location>
</feature>
<feature type="topological domain" description="Extracellular" evidence="2">
    <location>
        <begin position="442"/>
        <end position="477"/>
    </location>
</feature>
<feature type="transmembrane region" description="Helical; Name=7" evidence="2">
    <location>
        <begin position="478"/>
        <end position="498"/>
    </location>
</feature>
<feature type="topological domain" description="Cytoplasmic" evidence="2">
    <location>
        <begin position="499"/>
        <end position="666"/>
    </location>
</feature>
<feature type="domain" description="FZ" evidence="3">
    <location>
        <begin position="23"/>
        <end position="136"/>
    </location>
</feature>
<feature type="region of interest" description="Disordered" evidence="4">
    <location>
        <begin position="538"/>
        <end position="666"/>
    </location>
</feature>
<feature type="short sequence motif" description="Lys-Thr-X-X-X-Trp motif, mediates interaction with the PDZ domain of Dvl family members" evidence="1">
    <location>
        <begin position="502"/>
        <end position="507"/>
    </location>
</feature>
<feature type="compositionally biased region" description="Polar residues" evidence="4">
    <location>
        <begin position="550"/>
        <end position="565"/>
    </location>
</feature>
<feature type="compositionally biased region" description="Basic and acidic residues" evidence="4">
    <location>
        <begin position="617"/>
        <end position="638"/>
    </location>
</feature>
<feature type="compositionally biased region" description="Polar residues" evidence="4">
    <location>
        <begin position="639"/>
        <end position="656"/>
    </location>
</feature>
<feature type="glycosylation site" description="N-linked (GlcNAc...) asparagine" evidence="2">
    <location>
        <position position="42"/>
    </location>
</feature>
<feature type="glycosylation site" description="N-linked (GlcNAc...) asparagine" evidence="2">
    <location>
        <position position="265"/>
    </location>
</feature>
<feature type="glycosylation site" description="N-linked (GlcNAc...) asparagine" evidence="2">
    <location>
        <position position="356"/>
    </location>
</feature>
<feature type="disulfide bond" evidence="3">
    <location>
        <begin position="28"/>
        <end position="89"/>
    </location>
</feature>
<feature type="disulfide bond" evidence="3">
    <location>
        <begin position="36"/>
        <end position="82"/>
    </location>
</feature>
<feature type="disulfide bond" evidence="3">
    <location>
        <begin position="73"/>
        <end position="110"/>
    </location>
</feature>
<feature type="disulfide bond" evidence="3">
    <location>
        <begin position="99"/>
        <end position="133"/>
    </location>
</feature>
<feature type="disulfide bond" evidence="3">
    <location>
        <begin position="103"/>
        <end position="127"/>
    </location>
</feature>
<gene>
    <name type="primary">Fzd3</name>
</gene>
<sequence>MAVSWIVFDLWLLTVFLGQIGGHSLFSCEPITLRMCQDLPYNTTFMPNLLNHYDQQTAALAMEPFHPMVNLDCSRDFRPFLCALYAPICMEYGRVTLPCRRLCQRAYSECSKLMEMFGVPWPEDMECSRFPDCDEPYPRLVDLNLVGDPTEGAPVAVQRDYGFWCPRELKIDPDLGYSFLHVRDCSPPCPNMYFRREELSFARYFIGLISIICLSATLFTFLTFLIDVTRFRYPERPIIFYAVCYMMVSLIFFIGFLLEDRVACNASSPAQYKASTVTQGSHNKACTMLFMVLYFFTMAGSVWWVILTITWFLAAVPKWGSEAIEKKALLFHASAWGIPGTLTIILLAMNKIEGDNISGVCFVGLYDVDALRYFVLAPLCLYVVVGVSLLLAGIISLNRVRIEIPLEKENQDKLVKFMIRIGVFSILYLVPLLVVIGCYFYEQAYRGIWETTWIQERCREYHIPCPYQVTQMSRPDLILFLMKYLMALIVGIPSIFWVGSKKTCFEWASFFHGRRKKEIVNESRQVLQEPDFAQSLLRDPNTPIIRKSRGTSTQGTSTHASSTQLAMVDDQRSKAGSVHSKVSSYHGSLHRSRDGRYTPCSYRGMEERLPHGSMSRLTDHSRHSSSHRLNEQSRHSSIRDLSNNPMTHITHGTSMNRVIEEDGTSA</sequence>
<reference key="1">
    <citation type="journal article" date="1996" name="J. Biol. Chem.">
        <title>A large family of putative transmembrane receptors homologous to the product of the Drosophila tissue polarity gene frizzled.</title>
        <authorList>
            <person name="Wang Y."/>
            <person name="Macke J.P."/>
            <person name="Abella B.S."/>
            <person name="Andreasson K."/>
            <person name="Worley P."/>
            <person name="Gilbert D.J."/>
            <person name="Copeland N.G."/>
            <person name="Jenkins N.A."/>
            <person name="Nathans J."/>
        </authorList>
    </citation>
    <scope>NUCLEOTIDE SEQUENCE [MRNA]</scope>
    <scope>TISSUE SPECIFICITY</scope>
</reference>
<reference key="2">
    <citation type="journal article" date="1999" name="Curr. Biol.">
        <title>Protein kinase C is differentially stimulated by Wnt and Frizzled homologs in a G-protein-dependent manner.</title>
        <authorList>
            <person name="Sheldahl L.C."/>
            <person name="Park M."/>
            <person name="Malbon C.C."/>
            <person name="Moon R.T."/>
        </authorList>
    </citation>
    <scope>WNT-MEDIATED PKC ACTIVATION</scope>
</reference>
<reference key="3">
    <citation type="journal article" date="2001" name="J. Invest. Dermatol.">
        <title>Characterization of mouse frizzled-3 expression in hair follicle development and identification of the human homolog in keratinocytes.</title>
        <authorList>
            <person name="Hung B.S."/>
            <person name="Wang X.-Q."/>
            <person name="Cam G.R."/>
            <person name="Rothnagel J.A."/>
        </authorList>
    </citation>
    <scope>TISSUE SPECIFICITY</scope>
    <scope>DEVELOPMENTAL STAGE</scope>
</reference>
<reference key="4">
    <citation type="journal article" date="2002" name="J. Neurosci.">
        <title>Frizzled-3 is required for the development of major fiber tracts in the rostral CNS.</title>
        <authorList>
            <person name="Wang Y."/>
            <person name="Thekdi N."/>
            <person name="Smallwood P.M."/>
            <person name="Macke J.P."/>
            <person name="Nathans J."/>
        </authorList>
    </citation>
    <scope>FUNCTION</scope>
    <scope>DISRUPTION PHENOTYPE</scope>
    <scope>TISSUE SPECIFICITY</scope>
    <scope>DEVELOPMENTAL STAGE</scope>
</reference>
<reference key="5">
    <citation type="journal article" date="2003" name="Science">
        <title>Anterior-posterior guidance of commissural axons by Wnt-frizzled signaling.</title>
        <authorList>
            <person name="Lyuksyutova A.I."/>
            <person name="Lu C.C."/>
            <person name="Milanesio N."/>
            <person name="King L.A."/>
            <person name="Gu o N."/>
            <person name="Wang Y."/>
            <person name="Nathans J."/>
            <person name="Tessier-Lavigne M."/>
            <person name="Zou Y."/>
        </authorList>
    </citation>
    <scope>FUNCTION</scope>
    <scope>DISRUPTION PHENOTYPE</scope>
    <scope>DEVELOPMENTAL STAGE</scope>
</reference>
<reference key="6">
    <citation type="journal article" date="2006" name="J. Neurosci.">
        <title>Axonal growth and guidance defects in Frizzled3 knock-out mice: a comparison of diffusion tensor magnetic resonance imaging, neurofilament staining, and genetically directed cell labeling.</title>
        <authorList>
            <person name="Wang Y."/>
            <person name="Zhang J."/>
            <person name="Mori S."/>
            <person name="Nathans J."/>
        </authorList>
    </citation>
    <scope>FUNCTION</scope>
</reference>
<reference key="7">
    <citation type="journal article" date="2006" name="J. Neurosci.">
        <title>The role of Frizzled3 and Frizzled6 in neural tube closure and in the planar polarity of inner-ear sensory hair cells.</title>
        <authorList>
            <person name="Wang Y."/>
            <person name="Guo N."/>
            <person name="Nathans J."/>
        </authorList>
    </citation>
    <scope>FUNCTION</scope>
    <scope>DISRUPTION PHENOTYPE</scope>
    <scope>SUBCELLULAR LOCATION</scope>
    <scope>TISSUE SPECIFICITY</scope>
</reference>
<reference key="8">
    <citation type="journal article" date="2006" name="J. Neurosci.">
        <title>Asymmetric localization of Vangl2 and Fz3 indicate novel mechanisms for planar cell polarity in mammals.</title>
        <authorList>
            <person name="Montcouquiol M."/>
            <person name="Sans N."/>
            <person name="Huss D."/>
            <person name="Kach J."/>
            <person name="Dickman J.D."/>
            <person name="Forge A."/>
            <person name="Rachel R.A."/>
            <person name="Copeland N.G."/>
            <person name="Jenkins N.A."/>
            <person name="Bogani D."/>
            <person name="Murdoch J."/>
            <person name="Warchol M.E."/>
            <person name="Wenthold R.J."/>
            <person name="Kelley M.W."/>
        </authorList>
    </citation>
    <scope>INTERACTION WITH VANGL2</scope>
</reference>
<reference key="9">
    <citation type="journal article" date="2011" name="J. Neurosci.">
        <title>Frizzled3 is required for neurogenesis and target innervation during sympathetic nervous system development.</title>
        <authorList>
            <person name="Armstrong A."/>
            <person name="Ryu Y.K."/>
            <person name="Chieco D."/>
            <person name="Kuruvilla R."/>
        </authorList>
    </citation>
    <scope>FUNCTION</scope>
    <scope>DISRUPTION PHENOTYPE</scope>
    <scope>DEVELOPMENTAL STAGE</scope>
</reference>
<reference key="10">
    <citation type="journal article" date="2013" name="Elife">
        <title>Frizzled3 controls axonal development in distinct populations of cranial and spinal motor neurons.</title>
        <authorList>
            <person name="Hua Z.L."/>
            <person name="Smallwood P.M."/>
            <person name="Nathans J."/>
        </authorList>
    </citation>
    <scope>FUNCTION</scope>
    <scope>DISRUPTION PHENOTYPE</scope>
    <scope>CONDITIONAL KNOCKOUTS</scope>
</reference>
<reference key="11">
    <citation type="journal article" date="2014" name="Proc. Natl. Acad. Sci. U.S.A.">
        <title>Frizzled3 is required for the development of multiple axon tracts in the mouse central nervous system.</title>
        <authorList>
            <person name="Hua Z.L."/>
            <person name="Jeon S."/>
            <person name="Caterina M.J."/>
            <person name="Nathans J."/>
        </authorList>
    </citation>
    <scope>FUNCTION</scope>
    <scope>DISRUPTION PHENOTYPE</scope>
    <scope>CONDITIONAL KNOCKOUTS</scope>
</reference>
<accession>Q61086</accession>
<name>FZD3_MOUSE</name>
<keyword id="KW-1003">Cell membrane</keyword>
<keyword id="KW-0217">Developmental protein</keyword>
<keyword id="KW-1015">Disulfide bond</keyword>
<keyword id="KW-0297">G-protein coupled receptor</keyword>
<keyword id="KW-0325">Glycoprotein</keyword>
<keyword id="KW-0472">Membrane</keyword>
<keyword id="KW-0524">Neurogenesis</keyword>
<keyword id="KW-0675">Receptor</keyword>
<keyword id="KW-1185">Reference proteome</keyword>
<keyword id="KW-0732">Signal</keyword>
<keyword id="KW-0807">Transducer</keyword>
<keyword id="KW-0812">Transmembrane</keyword>
<keyword id="KW-1133">Transmembrane helix</keyword>
<keyword id="KW-0832">Ubl conjugation</keyword>
<keyword id="KW-0879">Wnt signaling pathway</keyword>
<protein>
    <recommendedName>
        <fullName>Frizzled-3</fullName>
        <shortName>Fz-3</shortName>
        <shortName>mFz3</shortName>
    </recommendedName>
</protein>
<organism>
    <name type="scientific">Mus musculus</name>
    <name type="common">Mouse</name>
    <dbReference type="NCBI Taxonomy" id="10090"/>
    <lineage>
        <taxon>Eukaryota</taxon>
        <taxon>Metazoa</taxon>
        <taxon>Chordata</taxon>
        <taxon>Craniata</taxon>
        <taxon>Vertebrata</taxon>
        <taxon>Euteleostomi</taxon>
        <taxon>Mammalia</taxon>
        <taxon>Eutheria</taxon>
        <taxon>Euarchontoglires</taxon>
        <taxon>Glires</taxon>
        <taxon>Rodentia</taxon>
        <taxon>Myomorpha</taxon>
        <taxon>Muroidea</taxon>
        <taxon>Muridae</taxon>
        <taxon>Murinae</taxon>
        <taxon>Mus</taxon>
        <taxon>Mus</taxon>
    </lineage>
</organism>
<dbReference type="EMBL" id="U43205">
    <property type="protein sequence ID" value="AAC52429.1"/>
    <property type="molecule type" value="mRNA"/>
</dbReference>
<dbReference type="CCDS" id="CCDS27212.1"/>
<dbReference type="RefSeq" id="NP_067433.1">
    <property type="nucleotide sequence ID" value="NM_021458.2"/>
</dbReference>
<dbReference type="SMR" id="Q61086"/>
<dbReference type="BioGRID" id="199776">
    <property type="interactions" value="1"/>
</dbReference>
<dbReference type="FunCoup" id="Q61086">
    <property type="interactions" value="1098"/>
</dbReference>
<dbReference type="STRING" id="10090.ENSMUSP00000115325"/>
<dbReference type="GlyCosmos" id="Q61086">
    <property type="glycosylation" value="3 sites, No reported glycans"/>
</dbReference>
<dbReference type="GlyGen" id="Q61086">
    <property type="glycosylation" value="4 sites, 1 N-linked glycan (1 site)"/>
</dbReference>
<dbReference type="iPTMnet" id="Q61086"/>
<dbReference type="PhosphoSitePlus" id="Q61086"/>
<dbReference type="SwissPalm" id="Q61086"/>
<dbReference type="PaxDb" id="10090-ENSMUSP00000115325"/>
<dbReference type="ProteomicsDB" id="272925"/>
<dbReference type="Antibodypedia" id="10432">
    <property type="antibodies" value="450 antibodies from 35 providers"/>
</dbReference>
<dbReference type="DNASU" id="14365"/>
<dbReference type="Ensembl" id="ENSMUST00000131309.3">
    <property type="protein sequence ID" value="ENSMUSP00000115325.2"/>
    <property type="gene ID" value="ENSMUSG00000007989.8"/>
</dbReference>
<dbReference type="GeneID" id="14365"/>
<dbReference type="KEGG" id="mmu:14365"/>
<dbReference type="UCSC" id="uc007ujb.2">
    <property type="organism name" value="mouse"/>
</dbReference>
<dbReference type="AGR" id="MGI:108476"/>
<dbReference type="CTD" id="7976"/>
<dbReference type="MGI" id="MGI:108476">
    <property type="gene designation" value="Fzd3"/>
</dbReference>
<dbReference type="VEuPathDB" id="HostDB:ENSMUSG00000007989"/>
<dbReference type="eggNOG" id="KOG3577">
    <property type="taxonomic scope" value="Eukaryota"/>
</dbReference>
<dbReference type="GeneTree" id="ENSGT00940000156491"/>
<dbReference type="HOGENOM" id="CLU_007873_4_1_1"/>
<dbReference type="InParanoid" id="Q61086"/>
<dbReference type="OMA" id="MFCYLWL"/>
<dbReference type="OrthoDB" id="10053709at2759"/>
<dbReference type="PhylomeDB" id="Q61086"/>
<dbReference type="TreeFam" id="TF317907"/>
<dbReference type="Reactome" id="R-MMU-4086398">
    <property type="pathway name" value="Ca2+ pathway"/>
</dbReference>
<dbReference type="Reactome" id="R-MMU-4086400">
    <property type="pathway name" value="PCP/CE pathway"/>
</dbReference>
<dbReference type="Reactome" id="R-MMU-4608870">
    <property type="pathway name" value="Asymmetric localization of PCP proteins"/>
</dbReference>
<dbReference type="BioGRID-ORCS" id="14365">
    <property type="hits" value="4 hits in 76 CRISPR screens"/>
</dbReference>
<dbReference type="ChiTaRS" id="Fzd3">
    <property type="organism name" value="mouse"/>
</dbReference>
<dbReference type="PRO" id="PR:Q61086"/>
<dbReference type="Proteomes" id="UP000000589">
    <property type="component" value="Chromosome 14"/>
</dbReference>
<dbReference type="RNAct" id="Q61086">
    <property type="molecule type" value="protein"/>
</dbReference>
<dbReference type="Bgee" id="ENSMUSG00000007989">
    <property type="expression patterns" value="Expressed in medial ganglionic eminence and 259 other cell types or tissues"/>
</dbReference>
<dbReference type="GO" id="GO:0045177">
    <property type="term" value="C:apical part of cell"/>
    <property type="evidence" value="ECO:0000314"/>
    <property type="project" value="MGI"/>
</dbReference>
<dbReference type="GO" id="GO:0016324">
    <property type="term" value="C:apical plasma membrane"/>
    <property type="evidence" value="ECO:0000314"/>
    <property type="project" value="MGI"/>
</dbReference>
<dbReference type="GO" id="GO:0030424">
    <property type="term" value="C:axon"/>
    <property type="evidence" value="ECO:0000314"/>
    <property type="project" value="BHF-UCL"/>
</dbReference>
<dbReference type="GO" id="GO:0009986">
    <property type="term" value="C:cell surface"/>
    <property type="evidence" value="ECO:0007669"/>
    <property type="project" value="UniProtKB-SubCell"/>
</dbReference>
<dbReference type="GO" id="GO:0005737">
    <property type="term" value="C:cytoplasm"/>
    <property type="evidence" value="ECO:0007669"/>
    <property type="project" value="Ensembl"/>
</dbReference>
<dbReference type="GO" id="GO:0030425">
    <property type="term" value="C:dendrite"/>
    <property type="evidence" value="ECO:0000314"/>
    <property type="project" value="BHF-UCL"/>
</dbReference>
<dbReference type="GO" id="GO:0032433">
    <property type="term" value="C:filopodium tip"/>
    <property type="evidence" value="ECO:0000314"/>
    <property type="project" value="MGI"/>
</dbReference>
<dbReference type="GO" id="GO:0098978">
    <property type="term" value="C:glutamatergic synapse"/>
    <property type="evidence" value="ECO:0000314"/>
    <property type="project" value="SynGO"/>
</dbReference>
<dbReference type="GO" id="GO:0016328">
    <property type="term" value="C:lateral plasma membrane"/>
    <property type="evidence" value="ECO:0000314"/>
    <property type="project" value="MGI"/>
</dbReference>
<dbReference type="GO" id="GO:0043025">
    <property type="term" value="C:neuronal cell body"/>
    <property type="evidence" value="ECO:0000314"/>
    <property type="project" value="BHF-UCL"/>
</dbReference>
<dbReference type="GO" id="GO:0005886">
    <property type="term" value="C:plasma membrane"/>
    <property type="evidence" value="ECO:0000314"/>
    <property type="project" value="BHF-UCL"/>
</dbReference>
<dbReference type="GO" id="GO:0048787">
    <property type="term" value="C:presynaptic active zone membrane"/>
    <property type="evidence" value="ECO:0000314"/>
    <property type="project" value="SynGO"/>
</dbReference>
<dbReference type="GO" id="GO:0004930">
    <property type="term" value="F:G protein-coupled receptor activity"/>
    <property type="evidence" value="ECO:0007669"/>
    <property type="project" value="UniProtKB-KW"/>
</dbReference>
<dbReference type="GO" id="GO:0030165">
    <property type="term" value="F:PDZ domain binding"/>
    <property type="evidence" value="ECO:0007669"/>
    <property type="project" value="Ensembl"/>
</dbReference>
<dbReference type="GO" id="GO:0042813">
    <property type="term" value="F:Wnt receptor activity"/>
    <property type="evidence" value="ECO:0000315"/>
    <property type="project" value="ParkinsonsUK-UCL"/>
</dbReference>
<dbReference type="GO" id="GO:0017147">
    <property type="term" value="F:Wnt-protein binding"/>
    <property type="evidence" value="ECO:0007669"/>
    <property type="project" value="Ensembl"/>
</dbReference>
<dbReference type="GO" id="GO:0060070">
    <property type="term" value="P:canonical Wnt signaling pathway"/>
    <property type="evidence" value="ECO:0007669"/>
    <property type="project" value="Ensembl"/>
</dbReference>
<dbReference type="GO" id="GO:0033278">
    <property type="term" value="P:cell proliferation in midbrain"/>
    <property type="evidence" value="ECO:0000316"/>
    <property type="project" value="MGI"/>
</dbReference>
<dbReference type="GO" id="GO:0071679">
    <property type="term" value="P:commissural neuron axon guidance"/>
    <property type="evidence" value="ECO:0000315"/>
    <property type="project" value="MGI"/>
</dbReference>
<dbReference type="GO" id="GO:0036514">
    <property type="term" value="P:dopaminergic neuron axon guidance"/>
    <property type="evidence" value="ECO:0000315"/>
    <property type="project" value="ParkinsonsUK-UCL"/>
</dbReference>
<dbReference type="GO" id="GO:0001736">
    <property type="term" value="P:establishment of planar polarity"/>
    <property type="evidence" value="ECO:0000316"/>
    <property type="project" value="MGI"/>
</dbReference>
<dbReference type="GO" id="GO:0001942">
    <property type="term" value="P:hair follicle development"/>
    <property type="evidence" value="ECO:0000270"/>
    <property type="project" value="BHF-UCL"/>
</dbReference>
<dbReference type="GO" id="GO:0042472">
    <property type="term" value="P:inner ear morphogenesis"/>
    <property type="evidence" value="ECO:0000316"/>
    <property type="project" value="MGI"/>
</dbReference>
<dbReference type="GO" id="GO:0030901">
    <property type="term" value="P:midbrain development"/>
    <property type="evidence" value="ECO:0000316"/>
    <property type="project" value="MGI"/>
</dbReference>
<dbReference type="GO" id="GO:0097475">
    <property type="term" value="P:motor neuron migration"/>
    <property type="evidence" value="ECO:0000315"/>
    <property type="project" value="MGI"/>
</dbReference>
<dbReference type="GO" id="GO:1900118">
    <property type="term" value="P:negative regulation of execution phase of apoptosis"/>
    <property type="evidence" value="ECO:0000315"/>
    <property type="project" value="UniProtKB"/>
</dbReference>
<dbReference type="GO" id="GO:0045976">
    <property type="term" value="P:negative regulation of mitotic cell cycle, embryonic"/>
    <property type="evidence" value="ECO:0000315"/>
    <property type="project" value="UniProtKB"/>
</dbReference>
<dbReference type="GO" id="GO:0001843">
    <property type="term" value="P:neural tube closure"/>
    <property type="evidence" value="ECO:0000316"/>
    <property type="project" value="MGI"/>
</dbReference>
<dbReference type="GO" id="GO:0002052">
    <property type="term" value="P:positive regulation of neuroblast proliferation"/>
    <property type="evidence" value="ECO:0000315"/>
    <property type="project" value="UniProtKB"/>
</dbReference>
<dbReference type="GO" id="GO:0036342">
    <property type="term" value="P:post-anal tail morphogenesis"/>
    <property type="evidence" value="ECO:0000315"/>
    <property type="project" value="MGI"/>
</dbReference>
<dbReference type="GO" id="GO:0051602">
    <property type="term" value="P:response to electrical stimulus"/>
    <property type="evidence" value="ECO:0007669"/>
    <property type="project" value="Ensembl"/>
</dbReference>
<dbReference type="GO" id="GO:0009410">
    <property type="term" value="P:response to xenobiotic stimulus"/>
    <property type="evidence" value="ECO:0007669"/>
    <property type="project" value="Ensembl"/>
</dbReference>
<dbReference type="GO" id="GO:0036515">
    <property type="term" value="P:serotonergic neuron axon guidance"/>
    <property type="evidence" value="ECO:0000315"/>
    <property type="project" value="ParkinsonsUK-UCL"/>
</dbReference>
<dbReference type="GO" id="GO:0061549">
    <property type="term" value="P:sympathetic ganglion development"/>
    <property type="evidence" value="ECO:0000315"/>
    <property type="project" value="UniProtKB"/>
</dbReference>
<dbReference type="GO" id="GO:0060071">
    <property type="term" value="P:Wnt signaling pathway, planar cell polarity pathway"/>
    <property type="evidence" value="ECO:0000315"/>
    <property type="project" value="ParkinsonsUK-UCL"/>
</dbReference>
<dbReference type="CDD" id="cd15033">
    <property type="entry name" value="7tmF_FZD3"/>
    <property type="match status" value="1"/>
</dbReference>
<dbReference type="CDD" id="cd07449">
    <property type="entry name" value="CRD_FZ3"/>
    <property type="match status" value="1"/>
</dbReference>
<dbReference type="FunFam" id="1.20.1070.10:FF:000036">
    <property type="entry name" value="frizzled-3 isoform X1"/>
    <property type="match status" value="1"/>
</dbReference>
<dbReference type="FunFam" id="1.10.2000.10:FF:000006">
    <property type="entry name" value="Frizzled-3 protein"/>
    <property type="match status" value="1"/>
</dbReference>
<dbReference type="Gene3D" id="1.10.2000.10">
    <property type="entry name" value="Frizzled cysteine-rich domain"/>
    <property type="match status" value="1"/>
</dbReference>
<dbReference type="Gene3D" id="1.20.1070.10">
    <property type="entry name" value="Rhodopsin 7-helix transmembrane proteins"/>
    <property type="match status" value="1"/>
</dbReference>
<dbReference type="InterPro" id="IPR015526">
    <property type="entry name" value="Frizzled/SFRP"/>
</dbReference>
<dbReference type="InterPro" id="IPR000539">
    <property type="entry name" value="Frizzled/Smoothened_7TM"/>
</dbReference>
<dbReference type="InterPro" id="IPR020067">
    <property type="entry name" value="Frizzled_dom"/>
</dbReference>
<dbReference type="InterPro" id="IPR036790">
    <property type="entry name" value="Frizzled_dom_sf"/>
</dbReference>
<dbReference type="InterPro" id="IPR041769">
    <property type="entry name" value="FZ3_CRD"/>
</dbReference>
<dbReference type="InterPro" id="IPR017981">
    <property type="entry name" value="GPCR_2-like_7TM"/>
</dbReference>
<dbReference type="PANTHER" id="PTHR11309">
    <property type="entry name" value="FRIZZLED"/>
    <property type="match status" value="1"/>
</dbReference>
<dbReference type="PANTHER" id="PTHR11309:SF22">
    <property type="entry name" value="FRIZZLED-3"/>
    <property type="match status" value="1"/>
</dbReference>
<dbReference type="Pfam" id="PF01534">
    <property type="entry name" value="Frizzled"/>
    <property type="match status" value="1"/>
</dbReference>
<dbReference type="Pfam" id="PF01392">
    <property type="entry name" value="Fz"/>
    <property type="match status" value="1"/>
</dbReference>
<dbReference type="PRINTS" id="PR00489">
    <property type="entry name" value="FRIZZLED"/>
</dbReference>
<dbReference type="SMART" id="SM00063">
    <property type="entry name" value="FRI"/>
    <property type="match status" value="1"/>
</dbReference>
<dbReference type="SMART" id="SM01330">
    <property type="entry name" value="Frizzled"/>
    <property type="match status" value="1"/>
</dbReference>
<dbReference type="SUPFAM" id="SSF63501">
    <property type="entry name" value="Frizzled cysteine-rich domain"/>
    <property type="match status" value="1"/>
</dbReference>
<dbReference type="PROSITE" id="PS50038">
    <property type="entry name" value="FZ"/>
    <property type="match status" value="1"/>
</dbReference>
<dbReference type="PROSITE" id="PS50261">
    <property type="entry name" value="G_PROTEIN_RECEP_F2_4"/>
    <property type="match status" value="1"/>
</dbReference>
<evidence type="ECO:0000250" key="1"/>
<evidence type="ECO:0000255" key="2"/>
<evidence type="ECO:0000255" key="3">
    <source>
        <dbReference type="PROSITE-ProRule" id="PRU00090"/>
    </source>
</evidence>
<evidence type="ECO:0000256" key="4">
    <source>
        <dbReference type="SAM" id="MobiDB-lite"/>
    </source>
</evidence>
<evidence type="ECO:0000269" key="5">
    <source>
    </source>
</evidence>
<evidence type="ECO:0000269" key="6">
    <source>
    </source>
</evidence>
<evidence type="ECO:0000269" key="7">
    <source>
    </source>
</evidence>
<evidence type="ECO:0000269" key="8">
    <source>
    </source>
</evidence>
<evidence type="ECO:0000269" key="9">
    <source>
    </source>
</evidence>
<evidence type="ECO:0000269" key="10">
    <source>
    </source>
</evidence>
<evidence type="ECO:0000269" key="11">
    <source>
    </source>
</evidence>
<evidence type="ECO:0000269" key="12">
    <source>
    </source>
</evidence>
<evidence type="ECO:0000269" key="13">
    <source>
    </source>
</evidence>
<evidence type="ECO:0000269" key="14">
    <source>
    </source>
</evidence>
<evidence type="ECO:0000305" key="15"/>
<comment type="function">
    <text evidence="6 7 8 9 11 12 13">Receptor for Wnt proteins. Most of frizzled receptors are coupled to the beta-catenin canonical signaling pathway, which leads to the activation of disheveled proteins, inhibition of GSK-3 kinase, nuclear accumulation of beta-catenin and activation of Wnt target genes. A second signaling pathway involving PKC and calcium fluxes has been seen for some family members, but it is not yet clear if it represents a distinct pathway or if it can be integrated in the canonical pathway, as PKC seems to be required for Wnt-mediated inactivation of GSK-3 kinase. Both pathways seem to involve interactions with G-proteins. Activation by Wnt5A stimulates PKC activity via a G-protein-dependent mechanism. Involved in transduction and intercellular transmission of polarity information during tissue morphogenesis and/or in differentiated tissues. Plays a role in controlling early axon growth and guidance processes necessary for the formation of a subset of central and peripheral major fiber tracts. Required for the development of major fiber tracts in the central nervous system, including: the anterior commissure, the corpus callosum, the thalamocortical, corticothalamic and nigrostriatal tracts, the corticospinal tract, the fasciculus retroflexus, the mammillothalamic tract, the medial lemniscus, and ascending fiber tracts from the spinal cord to the brain. In the peripheral nervous system, controls axon growth in distinct populations of cranial and spinal motor neurons, including the facial branchimotor nerve, the hypoglossal nerve, the phrenic nerve, and motor nerves innervating dorsal limbs. Involved in the migration of cranial neural crest cells. May also be implicated in the transmission of sensory information from the trunk and limbs to the brain. Controls commissural sensory axons guidance after midline crossing along the anterior-posterior axis in the developing spinal cord in a Wnt-dependent signaling pathway. Together with FZD6, is involved in the neural tube closure and plays a role in the regulation of the establishment of planar cell polarity (PCP), particularly in the orientation of asymmetric bundles of stereocilia on the apical faces of a subset of auditory and vestibular sensory cells located in the inner ear. Promotes neurogenesis by maintaining sympathetic neuroblasts within the cell cycle in a beta-catenin-dependent manner.</text>
</comment>
<comment type="subunit">
    <text evidence="10">Interacts with VANGL2.</text>
</comment>
<comment type="subcellular location">
    <subcellularLocation>
        <location>Membrane</location>
        <topology>Multi-pass membrane protein</topology>
    </subcellularLocation>
    <subcellularLocation>
        <location evidence="1">Cell membrane</location>
        <topology evidence="1">Multi-pass membrane protein</topology>
    </subcellularLocation>
    <subcellularLocation>
        <location evidence="9">Cell surface</location>
    </subcellularLocation>
    <subcellularLocation>
        <location evidence="9">Apical cell membrane</location>
        <topology>Multi-pass membrane protein</topology>
    </subcellularLocation>
    <text evidence="9">Colocalizes with FZD6 at the apical face of the cell.</text>
</comment>
<comment type="tissue specificity">
    <text evidence="5 6 9 14">Expressed in the cortex, diencephalon, rostral brainstem and little or no staining is seen in the striatum or cerebellum. Expressed in both hair cells and supporting cells in the utricle, saccule, cristae and the organ of Corti in the inner ear (at protein level). Highly expressed in the CNS. In skin, it is restricted to the epidermis and to the developing hair follicle.</text>
</comment>
<comment type="developmental stage">
    <text evidence="5 6 7 11">Expressed throughout the developing central nervous system (CNS). Expressed in the cortex, diencephalon, and brainstem, with the most intense staining in the striatum and trigeminal ganglia at 18 dpc (at protein level). First detected in discrete foci in the developing epidermis of 13 days old embryos, later in the hair follicle placodes of 15 days old embryos. Expressed in the ventral and lateral margins of the spinal cord from 9.5 to 13.5 dpc, where post-crossing commissural axons project longitudinally. Expressed in superior sympathetic cervical ganglia (SCG) at 14.5 and 16.5 dpc, a stage when the SCG is comprised primarily of proliferating sympathetic neuroblasts. In 17 days embryos and 1 day old newborn, expression is limited to suprabasal keratinocytes and is not seen in pelage follicles until 3 days postpartum. In 7 days old neonatal skin, expression occurs throughout the epidermis and in the outer cell layers of hair follicles.</text>
</comment>
<comment type="domain">
    <text evidence="1">Lys-Thr-X-X-X-Trp motif interacts with the PDZ domain of Dvl (Disheveled) family members and is involved in the activation of the Wnt/beta-catenin signaling pathway.</text>
</comment>
<comment type="domain">
    <text evidence="1">The FZ domain is involved in binding with Wnt ligands.</text>
</comment>
<comment type="PTM">
    <text evidence="1">Ubiquitinated by ZNRF3, leading to its degradation by the proteasome.</text>
</comment>
<comment type="disruption phenotype">
    <text evidence="6 7 9 11 12 13">Neonate knockout mice have a curly tail, flexed lower limbs, breathe irregularly and typically die within 30 minutes of birth. Central nervous system (CNS) shows severe defects in the development of several major axon tracts, including: a nearly complete absence of the three early most prominent axon tracts in the brain and the ventral branch of the trigeminal nerve, absence of subcortical and striatal axons, the anterior commissure, misrouting of thalamocortical axons, a nearly complete absence of the corticospinal tract, the fasciculus retroflexus, and the mammillothalamic tract, poor fasciculation of the medial lemniscus and a disorganization of axon bundles in the reticular formation, severe defect in the asymmetric rostrocaudal orientation of dopaminergic and serotonergic axons, a large reduction or complete absence of ascending spinal axon tracts in the braistem, midbrain and thalamus, peripheral nerves defect in several motor neurons, such as in the VIIth and XIIth cranial motor nerves, the phrenic nerve, and the spinal motor nerve which failed to form connections with their respective targets and display also aberrant migration of a subpopulation of cranial neural crest cells (PubMed:12351730, PubMed:24347548, PubMed:24799694). Neonate knockout mice show fewer S-phase proliferating neuroblasts, premature cell cycle exit and enhanced apoptosis in early-stage superior cervical ganglia (SCGs), and in some cases, complete absence of sympathetic innervation of several peripheral targets (PubMed:21325504). Display also impaired rostral turning by growth cones of spinal cord commissural sensory axons (PubMed:14671310). FZD3 and FZD6 double knockout embryos have a curled tail, exhibit defects in neural tube and eyelids closure, in the orientation of hair bundles on inner-ear sensory cells and die at birth (PubMed:16495441). The following conditional knockout mice display the corresponding phenotypes: dopaminergic neuron-specific shows a defect in the orientation and growth of midbrain dopaminergic axons with an absence of striatum innervation; retinal ganglion cell (RGC)-specific displays a misrouting of a subset of optic tract axons and a lack of the medial terminal nucleus (MTN) innervation; neocortex neuron-specific displays a total absence of the posterior part of the anterior commissure and aberrant axon trajectories appearing in the external capsule; ventral telencephalon neuron-specific shows corticothalamic, thalamocortical and corticospinal tracts defect to various extent; telencephalon neuron-specific exhibits the full spectrum of axon defects seen in the classical null mutant knockout mice; cholinergic neuron-specific shows an absence of cholinergic fiber tracts passing through the striatum, a defective caudal migration of neurons of the VIIth motor nucleus and a loss of motor innervation to the face, a decrease in motor innervation of the tongue by the XIIth nerve and a complete loss of cholinergic neurons in the vomeronasal organ; oligodendrocyte neuron-specific leads to the complete spectrum of motor neuron phenotypes shown by the classical mutant knockout mice; caudal and upper thorax region-specific leads to a loss of motor innervation and an atrophy of anterior compartment muscles in the lower hindlimb by the deep peroneal nerve and a nearly absence in ascending spinal sensory axons in the brainstem, midbrain and thalamus altering the ability to transmit sensory information from the trunk and limbs to the brain in postnatal life (PubMed:24347548, PubMed:24799694).</text>
</comment>
<comment type="similarity">
    <text evidence="15">Belongs to the G-protein coupled receptor Fz/Smo family.</text>
</comment>
<proteinExistence type="evidence at protein level"/>